<accession>P54897</accession>
<dbReference type="EC" id="5.1.1.7" evidence="1"/>
<dbReference type="EMBL" id="Z46907">
    <property type="protein sequence ID" value="CAA87006.1"/>
    <property type="molecule type" value="Genomic_DNA"/>
</dbReference>
<dbReference type="EMBL" id="BA000019">
    <property type="protein sequence ID" value="BAB76540.1"/>
    <property type="molecule type" value="Genomic_DNA"/>
</dbReference>
<dbReference type="PIR" id="AI2410">
    <property type="entry name" value="AI2410"/>
</dbReference>
<dbReference type="PIR" id="S52295">
    <property type="entry name" value="S52295"/>
</dbReference>
<dbReference type="RefSeq" id="WP_010998969.1">
    <property type="nucleotide sequence ID" value="NZ_RSCN01000037.1"/>
</dbReference>
<dbReference type="SMR" id="P54897"/>
<dbReference type="STRING" id="103690.gene:10496895"/>
<dbReference type="KEGG" id="ana:alr4841"/>
<dbReference type="eggNOG" id="COG0253">
    <property type="taxonomic scope" value="Bacteria"/>
</dbReference>
<dbReference type="OrthoDB" id="9805408at2"/>
<dbReference type="UniPathway" id="UPA00034">
    <property type="reaction ID" value="UER00025"/>
</dbReference>
<dbReference type="Proteomes" id="UP000002483">
    <property type="component" value="Chromosome"/>
</dbReference>
<dbReference type="GO" id="GO:0005829">
    <property type="term" value="C:cytosol"/>
    <property type="evidence" value="ECO:0007669"/>
    <property type="project" value="TreeGrafter"/>
</dbReference>
<dbReference type="GO" id="GO:0008837">
    <property type="term" value="F:diaminopimelate epimerase activity"/>
    <property type="evidence" value="ECO:0007669"/>
    <property type="project" value="UniProtKB-UniRule"/>
</dbReference>
<dbReference type="GO" id="GO:0009089">
    <property type="term" value="P:lysine biosynthetic process via diaminopimelate"/>
    <property type="evidence" value="ECO:0007669"/>
    <property type="project" value="UniProtKB-UniRule"/>
</dbReference>
<dbReference type="Gene3D" id="3.10.310.10">
    <property type="entry name" value="Diaminopimelate Epimerase, Chain A, domain 1"/>
    <property type="match status" value="2"/>
</dbReference>
<dbReference type="HAMAP" id="MF_00197">
    <property type="entry name" value="DAP_epimerase"/>
    <property type="match status" value="1"/>
</dbReference>
<dbReference type="InterPro" id="IPR001653">
    <property type="entry name" value="DAP_epimerase_DapF"/>
</dbReference>
<dbReference type="NCBIfam" id="TIGR00652">
    <property type="entry name" value="DapF"/>
    <property type="match status" value="1"/>
</dbReference>
<dbReference type="PANTHER" id="PTHR31689:SF0">
    <property type="entry name" value="DIAMINOPIMELATE EPIMERASE"/>
    <property type="match status" value="1"/>
</dbReference>
<dbReference type="PANTHER" id="PTHR31689">
    <property type="entry name" value="DIAMINOPIMELATE EPIMERASE, CHLOROPLASTIC"/>
    <property type="match status" value="1"/>
</dbReference>
<dbReference type="Pfam" id="PF01678">
    <property type="entry name" value="DAP_epimerase"/>
    <property type="match status" value="2"/>
</dbReference>
<dbReference type="SUPFAM" id="SSF54506">
    <property type="entry name" value="Diaminopimelate epimerase-like"/>
    <property type="match status" value="2"/>
</dbReference>
<comment type="function">
    <text evidence="1">Catalyzes the stereoinversion of LL-2,6-diaminopimelate (L,L-DAP) to meso-diaminopimelate (meso-DAP), a precursor of L-lysine and an essential component of the bacterial peptidoglycan.</text>
</comment>
<comment type="catalytic activity">
    <reaction evidence="1">
        <text>(2S,6S)-2,6-diaminopimelate = meso-2,6-diaminopimelate</text>
        <dbReference type="Rhea" id="RHEA:15393"/>
        <dbReference type="ChEBI" id="CHEBI:57609"/>
        <dbReference type="ChEBI" id="CHEBI:57791"/>
        <dbReference type="EC" id="5.1.1.7"/>
    </reaction>
</comment>
<comment type="pathway">
    <text evidence="1">Amino-acid biosynthesis; L-lysine biosynthesis via DAP pathway; DL-2,6-diaminopimelate from LL-2,6-diaminopimelate: step 1/1.</text>
</comment>
<comment type="subunit">
    <text evidence="1">Homodimer.</text>
</comment>
<comment type="subcellular location">
    <subcellularLocation>
        <location evidence="1">Cytoplasm</location>
    </subcellularLocation>
</comment>
<comment type="similarity">
    <text evidence="1">Belongs to the diaminopimelate epimerase family.</text>
</comment>
<comment type="caution">
    <text evidence="2">Could lack activity as the potential active site Cys residues in positions 72 and 218 are both replaced by a Ser.</text>
</comment>
<evidence type="ECO:0000255" key="1">
    <source>
        <dbReference type="HAMAP-Rule" id="MF_00197"/>
    </source>
</evidence>
<evidence type="ECO:0000305" key="2"/>
<protein>
    <recommendedName>
        <fullName evidence="1">Diaminopimelate epimerase 2</fullName>
        <shortName evidence="1">DAP epimerase 2</shortName>
        <ecNumber evidence="1">5.1.1.7</ecNumber>
    </recommendedName>
    <alternativeName>
        <fullName evidence="1">PLP-independent amino acid racemase 2</fullName>
    </alternativeName>
</protein>
<reference key="1">
    <citation type="journal article" date="1997" name="J. Bacteriol.">
        <title>Identification and characterization of the nifV-nifZ-nifT gene region from the filamentous cyanobacterium Anabaena sp. strain PCC 7120.</title>
        <authorList>
            <person name="Stricker O."/>
            <person name="Masepohl B."/>
            <person name="Klipp W."/>
            <person name="Boehme H."/>
        </authorList>
    </citation>
    <scope>NUCLEOTIDE SEQUENCE [GENOMIC DNA]</scope>
</reference>
<reference key="2">
    <citation type="journal article" date="2001" name="DNA Res.">
        <title>Complete genomic sequence of the filamentous nitrogen-fixing cyanobacterium Anabaena sp. strain PCC 7120.</title>
        <authorList>
            <person name="Kaneko T."/>
            <person name="Nakamura Y."/>
            <person name="Wolk C.P."/>
            <person name="Kuritz T."/>
            <person name="Sasamoto S."/>
            <person name="Watanabe A."/>
            <person name="Iriguchi M."/>
            <person name="Ishikawa A."/>
            <person name="Kawashima K."/>
            <person name="Kimura T."/>
            <person name="Kishida Y."/>
            <person name="Kohara M."/>
            <person name="Matsumoto M."/>
            <person name="Matsuno A."/>
            <person name="Muraki A."/>
            <person name="Nakazaki N."/>
            <person name="Shimpo S."/>
            <person name="Sugimoto M."/>
            <person name="Takazawa M."/>
            <person name="Yamada M."/>
            <person name="Yasuda M."/>
            <person name="Tabata S."/>
        </authorList>
    </citation>
    <scope>NUCLEOTIDE SEQUENCE [LARGE SCALE GENOMIC DNA]</scope>
    <source>
        <strain>PCC 7120 / SAG 25.82 / UTEX 2576</strain>
    </source>
</reference>
<gene>
    <name evidence="1" type="primary">dapF2</name>
    <name type="synonym">dapF</name>
    <name type="ordered locus">alr4841</name>
</gene>
<keyword id="KW-0028">Amino-acid biosynthesis</keyword>
<keyword id="KW-0963">Cytoplasm</keyword>
<keyword id="KW-0413">Isomerase</keyword>
<keyword id="KW-0457">Lysine biosynthesis</keyword>
<keyword id="KW-1185">Reference proteome</keyword>
<organism>
    <name type="scientific">Nostoc sp. (strain PCC 7120 / SAG 25.82 / UTEX 2576)</name>
    <dbReference type="NCBI Taxonomy" id="103690"/>
    <lineage>
        <taxon>Bacteria</taxon>
        <taxon>Bacillati</taxon>
        <taxon>Cyanobacteriota</taxon>
        <taxon>Cyanophyceae</taxon>
        <taxon>Nostocales</taxon>
        <taxon>Nostocaceae</taxon>
        <taxon>Nostoc</taxon>
    </lineage>
</organism>
<feature type="chain" id="PRO_0000149816" description="Diaminopimelate epimerase 2">
    <location>
        <begin position="1"/>
        <end position="285"/>
    </location>
</feature>
<feature type="binding site" evidence="1">
    <location>
        <position position="11"/>
    </location>
    <ligand>
        <name>substrate</name>
    </ligand>
</feature>
<feature type="binding site" evidence="1">
    <location>
        <position position="63"/>
    </location>
    <ligand>
        <name>substrate</name>
    </ligand>
</feature>
<feature type="binding site" evidence="1">
    <location>
        <begin position="73"/>
        <end position="74"/>
    </location>
    <ligand>
        <name>substrate</name>
    </ligand>
</feature>
<feature type="binding site" evidence="1">
    <location>
        <position position="158"/>
    </location>
    <ligand>
        <name>substrate</name>
    </ligand>
</feature>
<feature type="binding site" evidence="1">
    <location>
        <position position="191"/>
    </location>
    <ligand>
        <name>substrate</name>
    </ligand>
</feature>
<feature type="binding site" evidence="1">
    <location>
        <begin position="209"/>
        <end position="210"/>
    </location>
    <ligand>
        <name>substrate</name>
    </ligand>
</feature>
<feature type="binding site" evidence="1">
    <location>
        <begin position="219"/>
        <end position="220"/>
    </location>
    <ligand>
        <name>substrate</name>
    </ligand>
</feature>
<feature type="site" description="Could be important to modulate the pK values of the two catalytic cysteine residues" evidence="1">
    <location>
        <position position="160"/>
    </location>
</feature>
<feature type="site" description="Could be important to modulate the pK values of the two catalytic cysteine residues" evidence="1">
    <location>
        <position position="209"/>
    </location>
</feature>
<feature type="sequence conflict" description="In Ref. 1; CAA87006." evidence="2" ref="1">
    <location>
        <position position="223"/>
    </location>
</feature>
<sequence length="285" mass="31355">MKFYKYHALGNDYLVINPQDLKFPLTPEKIKIICHRNFGIGSDGILLGPLASTKAQFALRIFNPDGSEAEKSGNGLRIFSRYLWDMGLVDEKPFSIETAGGIVESAIKDAGKTVQVEMGKVSFWSRDIPVIGDDREVIQEKIFLDEGIFTFCAATIGNPHCVILLDDINSEVARNFGPIFEGYPLFPNRTNVQFMKVLDRSTIQIEIWERGAGYTLASGSSSSAAAATAHKLGLCDSKIIVKMPGGDILIQIKDDFHISMTDSVTKLAQGELSTEIFAIETVINI</sequence>
<proteinExistence type="inferred from homology"/>
<name>DAPF2_NOSS1</name>